<accession>A6ZUG8</accession>
<name>CHO2_YEAS7</name>
<comment type="function">
    <text evidence="2">Catalyzes the first step of the methylation pathway of phosphatidylcholine biosynthesis, the SAM-dependent methylation of phosphatidylethanolamine (PE) to phosphatidylmonomethylethanolamine (PMME).</text>
</comment>
<comment type="catalytic activity">
    <reaction evidence="2">
        <text>a 1,2-diacyl-sn-glycero-3-phosphoethanolamine + S-adenosyl-L-methionine = a 1,2-diacyl-sn-glycero-3-phospho-N-methylethanolamine + S-adenosyl-L-homocysteine + H(+)</text>
        <dbReference type="Rhea" id="RHEA:11164"/>
        <dbReference type="ChEBI" id="CHEBI:15378"/>
        <dbReference type="ChEBI" id="CHEBI:57856"/>
        <dbReference type="ChEBI" id="CHEBI:59789"/>
        <dbReference type="ChEBI" id="CHEBI:64573"/>
        <dbReference type="ChEBI" id="CHEBI:64612"/>
        <dbReference type="EC" id="2.1.1.17"/>
    </reaction>
</comment>
<comment type="pathway">
    <text evidence="2">Phospholipid metabolism; phosphatidylcholine biosynthesis.</text>
</comment>
<comment type="subcellular location">
    <subcellularLocation>
        <location evidence="2">Endoplasmic reticulum membrane</location>
        <topology evidence="2">Multi-pass membrane protein</topology>
    </subcellularLocation>
</comment>
<comment type="similarity">
    <text evidence="2">Belongs to the class VI-like SAM-binding methyltransferase superfamily. CHO2 family.</text>
</comment>
<dbReference type="EC" id="2.1.1.17" evidence="2"/>
<dbReference type="EMBL" id="AAFW02000100">
    <property type="protein sequence ID" value="EDN61745.1"/>
    <property type="molecule type" value="Genomic_DNA"/>
</dbReference>
<dbReference type="HOGENOM" id="CLU_005987_0_1_1"/>
<dbReference type="UniPathway" id="UPA00753"/>
<dbReference type="Proteomes" id="UP000007060">
    <property type="component" value="Unassembled WGS sequence"/>
</dbReference>
<dbReference type="GO" id="GO:0005789">
    <property type="term" value="C:endoplasmic reticulum membrane"/>
    <property type="evidence" value="ECO:0007669"/>
    <property type="project" value="UniProtKB-SubCell"/>
</dbReference>
<dbReference type="GO" id="GO:0004608">
    <property type="term" value="F:phosphatidylethanolamine N-methyltransferase activity"/>
    <property type="evidence" value="ECO:0007669"/>
    <property type="project" value="UniProtKB-UniRule"/>
</dbReference>
<dbReference type="GO" id="GO:0032259">
    <property type="term" value="P:methylation"/>
    <property type="evidence" value="ECO:0007669"/>
    <property type="project" value="UniProtKB-KW"/>
</dbReference>
<dbReference type="GO" id="GO:0006656">
    <property type="term" value="P:phosphatidylcholine biosynthetic process"/>
    <property type="evidence" value="ECO:0007669"/>
    <property type="project" value="UniProtKB-UniRule"/>
</dbReference>
<dbReference type="FunFam" id="1.20.120.1630:FF:000016">
    <property type="entry name" value="Phosphatidylethanolamine N-methyltransferase"/>
    <property type="match status" value="1"/>
</dbReference>
<dbReference type="Gene3D" id="1.20.120.1630">
    <property type="match status" value="2"/>
</dbReference>
<dbReference type="Gene3D" id="2.60.40.2840">
    <property type="match status" value="1"/>
</dbReference>
<dbReference type="HAMAP" id="MF_03217">
    <property type="entry name" value="PEMT"/>
    <property type="match status" value="1"/>
</dbReference>
<dbReference type="InterPro" id="IPR007318">
    <property type="entry name" value="Phopholipid_MeTrfase"/>
</dbReference>
<dbReference type="InterPro" id="IPR016219">
    <property type="entry name" value="Phosphatid-EA_MeTrfase_fun"/>
</dbReference>
<dbReference type="PANTHER" id="PTHR32138">
    <property type="entry name" value="PHOSPHATIDYLETHANOLAMINE N-METHYLTRANSFERASE"/>
    <property type="match status" value="1"/>
</dbReference>
<dbReference type="PANTHER" id="PTHR32138:SF0">
    <property type="entry name" value="PHOSPHATIDYLETHANOLAMINE N-METHYLTRANSFERASE"/>
    <property type="match status" value="1"/>
</dbReference>
<dbReference type="Pfam" id="PF04191">
    <property type="entry name" value="PEMT"/>
    <property type="match status" value="2"/>
</dbReference>
<dbReference type="PIRSF" id="PIRSF000383">
    <property type="entry name" value="PEAMT"/>
    <property type="match status" value="1"/>
</dbReference>
<dbReference type="PROSITE" id="PS51598">
    <property type="entry name" value="SAM_CHO2"/>
    <property type="match status" value="1"/>
</dbReference>
<organism>
    <name type="scientific">Saccharomyces cerevisiae (strain YJM789)</name>
    <name type="common">Baker's yeast</name>
    <dbReference type="NCBI Taxonomy" id="307796"/>
    <lineage>
        <taxon>Eukaryota</taxon>
        <taxon>Fungi</taxon>
        <taxon>Dikarya</taxon>
        <taxon>Ascomycota</taxon>
        <taxon>Saccharomycotina</taxon>
        <taxon>Saccharomycetes</taxon>
        <taxon>Saccharomycetales</taxon>
        <taxon>Saccharomycetaceae</taxon>
        <taxon>Saccharomyces</taxon>
    </lineage>
</organism>
<gene>
    <name type="primary">CHO2</name>
    <name type="ORF">SCY_2051</name>
</gene>
<feature type="initiator methionine" description="Removed" evidence="1">
    <location>
        <position position="1"/>
    </location>
</feature>
<feature type="chain" id="PRO_0000405916" description="Phosphatidylethanolamine N-methyltransferase">
    <location>
        <begin position="2"/>
        <end position="869"/>
    </location>
</feature>
<feature type="topological domain" description="Lumenal" evidence="2">
    <location>
        <begin position="2"/>
        <end position="55"/>
    </location>
</feature>
<feature type="transmembrane region" description="Helical" evidence="2">
    <location>
        <begin position="56"/>
        <end position="76"/>
    </location>
</feature>
<feature type="topological domain" description="Cytoplasmic" evidence="2">
    <location>
        <begin position="77"/>
        <end position="86"/>
    </location>
</feature>
<feature type="transmembrane region" description="Helical" evidence="2">
    <location>
        <begin position="87"/>
        <end position="107"/>
    </location>
</feature>
<feature type="topological domain" description="Lumenal" evidence="2">
    <location>
        <begin position="108"/>
        <end position="187"/>
    </location>
</feature>
<feature type="transmembrane region" description="Helical" evidence="2">
    <location>
        <begin position="188"/>
        <end position="208"/>
    </location>
</feature>
<feature type="topological domain" description="Cytoplasmic" evidence="2">
    <location>
        <begin position="209"/>
        <end position="212"/>
    </location>
</feature>
<feature type="transmembrane region" description="Helical" evidence="2">
    <location>
        <begin position="213"/>
        <end position="233"/>
    </location>
</feature>
<feature type="topological domain" description="Lumenal" evidence="2">
    <location>
        <begin position="234"/>
        <end position="258"/>
    </location>
</feature>
<feature type="transmembrane region" description="Helical" evidence="2">
    <location>
        <begin position="259"/>
        <end position="279"/>
    </location>
</feature>
<feature type="topological domain" description="Cytoplasmic" evidence="2">
    <location>
        <begin position="280"/>
        <end position="291"/>
    </location>
</feature>
<feature type="transmembrane region" description="Helical" evidence="2">
    <location>
        <begin position="292"/>
        <end position="310"/>
    </location>
</feature>
<feature type="topological domain" description="Lumenal" evidence="2">
    <location>
        <begin position="311"/>
        <end position="362"/>
    </location>
</feature>
<feature type="transmembrane region" description="Helical" evidence="2">
    <location>
        <begin position="363"/>
        <end position="383"/>
    </location>
</feature>
<feature type="topological domain" description="Cytoplasmic" evidence="2">
    <location>
        <begin position="384"/>
        <end position="389"/>
    </location>
</feature>
<feature type="transmembrane region" description="Helical" evidence="2">
    <location>
        <begin position="390"/>
        <end position="410"/>
    </location>
</feature>
<feature type="topological domain" description="Lumenal" evidence="2">
    <location>
        <begin position="411"/>
        <end position="439"/>
    </location>
</feature>
<feature type="transmembrane region" description="Helical" evidence="2">
    <location>
        <begin position="440"/>
        <end position="460"/>
    </location>
</feature>
<feature type="topological domain" description="Cytoplasmic" evidence="2">
    <location>
        <begin position="461"/>
        <end position="463"/>
    </location>
</feature>
<feature type="transmembrane region" description="Helical" evidence="2">
    <location>
        <begin position="464"/>
        <end position="484"/>
    </location>
</feature>
<feature type="topological domain" description="Lumenal" evidence="2">
    <location>
        <begin position="485"/>
        <end position="534"/>
    </location>
</feature>
<feature type="transmembrane region" description="Helical" evidence="2">
    <location>
        <begin position="535"/>
        <end position="555"/>
    </location>
</feature>
<feature type="topological domain" description="Cytoplasmic" evidence="2">
    <location>
        <begin position="556"/>
        <end position="869"/>
    </location>
</feature>
<feature type="modified residue" description="N-acetylserine" evidence="1">
    <location>
        <position position="2"/>
    </location>
</feature>
<evidence type="ECO:0000250" key="1">
    <source>
        <dbReference type="UniProtKB" id="P05374"/>
    </source>
</evidence>
<evidence type="ECO:0000255" key="2">
    <source>
        <dbReference type="HAMAP-Rule" id="MF_03217"/>
    </source>
</evidence>
<protein>
    <recommendedName>
        <fullName evidence="2">Phosphatidylethanolamine N-methyltransferase</fullName>
        <shortName evidence="2">PE methyltransferase</shortName>
        <shortName evidence="2">PEAMT</shortName>
        <shortName evidence="2">PEMT</shortName>
        <ecNumber evidence="2">2.1.1.17</ecNumber>
    </recommendedName>
</protein>
<reference key="1">
    <citation type="journal article" date="2007" name="Proc. Natl. Acad. Sci. U.S.A.">
        <title>Genome sequencing and comparative analysis of Saccharomyces cerevisiae strain YJM789.</title>
        <authorList>
            <person name="Wei W."/>
            <person name="McCusker J.H."/>
            <person name="Hyman R.W."/>
            <person name="Jones T."/>
            <person name="Ning Y."/>
            <person name="Cao Z."/>
            <person name="Gu Z."/>
            <person name="Bruno D."/>
            <person name="Miranda M."/>
            <person name="Nguyen M."/>
            <person name="Wilhelmy J."/>
            <person name="Komp C."/>
            <person name="Tamse R."/>
            <person name="Wang X."/>
            <person name="Jia P."/>
            <person name="Luedi P."/>
            <person name="Oefner P.J."/>
            <person name="David L."/>
            <person name="Dietrich F.S."/>
            <person name="Li Y."/>
            <person name="Davis R.W."/>
            <person name="Steinmetz L.M."/>
        </authorList>
    </citation>
    <scope>NUCLEOTIDE SEQUENCE [LARGE SCALE GENOMIC DNA]</scope>
    <source>
        <strain>YJM789</strain>
    </source>
</reference>
<keyword id="KW-0007">Acetylation</keyword>
<keyword id="KW-0256">Endoplasmic reticulum</keyword>
<keyword id="KW-0444">Lipid biosynthesis</keyword>
<keyword id="KW-0443">Lipid metabolism</keyword>
<keyword id="KW-0472">Membrane</keyword>
<keyword id="KW-0489">Methyltransferase</keyword>
<keyword id="KW-0594">Phospholipid biosynthesis</keyword>
<keyword id="KW-1208">Phospholipid metabolism</keyword>
<keyword id="KW-0949">S-adenosyl-L-methionine</keyword>
<keyword id="KW-0808">Transferase</keyword>
<keyword id="KW-0812">Transmembrane</keyword>
<keyword id="KW-1133">Transmembrane helix</keyword>
<sequence>MSSCKTTLSEMVGSVTKDRGTINVKARTRSSNVTFKPPVTHDMVRSLFDPTLKKSLLEKCIALAIISNFFICYWVFQRFGLQFTKYFFLVQYLFWRIAYNLGIGLVLHYQSHYETLTNCAKTHAIFSKIPHNKDANSNFSTNSNSFSEKFWNFIRKFCQYEIRSKMPKEYDLFAYPEEINVWLIFRQFVDLILMQDFVTYIIYVYLSIPYSWVQIFNWRSLLGVILILFNIWVKLDAHRVVKDYAWYWGDFFFLEESELIFDGVFNISPHPMYSIGYLGYYGLSLICNDYKVLLVSVFGHYSQFLFLKYVENPHIERTYGDGTDSDSQMNSRIDDLISKENYDYSRPLINMGLSFNNFNKLRFTDYFTIGTVAALMLGAIMNARFINLNYLFITVFVTKLVSWLFISTILYKQSQSKWFTRLFLENGYTQVYSYEQWQFIYNYYLVLTYTLMIIYTGLQIWSNFSNINNSQLIFGLILVALQTWCDKETRLAISDFGWFYGDFFLSNYISTRKLTSQGIYRYLNHPEAVLGVVGVWGTVLMTNFAVTNIILAVLWTLTNFILVKFIETPHVNKIYGKTKRVSGVGKTLLGLKPLRQVSDIVNRIENIIIKSLVDESKNSNGGAELLPKNYQDNKEWNILIQEAMDSVATRLSPYCELKIENEQIETNFVLPTPVTLNWKMPIELYNGDDWIGLYKVIDTRADREKTRVGSGGHWSATSKDSYMNHGLRHKESVTEIKATEKYVQGKVTFDTSLLYFENGIYEFRYHSGNSHKVLLISTPFEISLPVLNTTTPELFEKDLTEFLTKVNVLKDGKFRPLGNKFFGMDSLKQLIKNSIGVELSSEYMRRVNGDAHIISHRAWDIKQTLDSLA</sequence>
<proteinExistence type="inferred from homology"/>